<dbReference type="EC" id="3.1.1.29" evidence="1"/>
<dbReference type="EMBL" id="AE016879">
    <property type="protein sequence ID" value="AAP24105.1"/>
    <property type="molecule type" value="Genomic_DNA"/>
</dbReference>
<dbReference type="EMBL" id="AE017334">
    <property type="protein sequence ID" value="AAT29128.1"/>
    <property type="molecule type" value="Genomic_DNA"/>
</dbReference>
<dbReference type="EMBL" id="AE017225">
    <property type="protein sequence ID" value="AAT52388.1"/>
    <property type="molecule type" value="Genomic_DNA"/>
</dbReference>
<dbReference type="RefSeq" id="NP_842619.3">
    <property type="nucleotide sequence ID" value="NC_003997.3"/>
</dbReference>
<dbReference type="RefSeq" id="WP_003170434.1">
    <property type="nucleotide sequence ID" value="NZ_WXXJ01000001.1"/>
</dbReference>
<dbReference type="RefSeq" id="YP_026337.1">
    <property type="nucleotide sequence ID" value="NC_005945.1"/>
</dbReference>
<dbReference type="SMR" id="Q81VY9"/>
<dbReference type="STRING" id="261594.GBAA_0050"/>
<dbReference type="DNASU" id="1087397"/>
<dbReference type="GeneID" id="93011019"/>
<dbReference type="KEGG" id="ban:BA_0050"/>
<dbReference type="KEGG" id="bar:GBAA_0050"/>
<dbReference type="KEGG" id="bat:BAS0050"/>
<dbReference type="PATRIC" id="fig|1392.231.peg.4225"/>
<dbReference type="eggNOG" id="COG0193">
    <property type="taxonomic scope" value="Bacteria"/>
</dbReference>
<dbReference type="HOGENOM" id="CLU_062456_4_1_9"/>
<dbReference type="Proteomes" id="UP000000427">
    <property type="component" value="Chromosome"/>
</dbReference>
<dbReference type="Proteomes" id="UP000000594">
    <property type="component" value="Chromosome"/>
</dbReference>
<dbReference type="GO" id="GO:0005737">
    <property type="term" value="C:cytoplasm"/>
    <property type="evidence" value="ECO:0007669"/>
    <property type="project" value="UniProtKB-SubCell"/>
</dbReference>
<dbReference type="GO" id="GO:0004045">
    <property type="term" value="F:peptidyl-tRNA hydrolase activity"/>
    <property type="evidence" value="ECO:0007669"/>
    <property type="project" value="UniProtKB-UniRule"/>
</dbReference>
<dbReference type="GO" id="GO:0000049">
    <property type="term" value="F:tRNA binding"/>
    <property type="evidence" value="ECO:0007669"/>
    <property type="project" value="UniProtKB-UniRule"/>
</dbReference>
<dbReference type="GO" id="GO:0006515">
    <property type="term" value="P:protein quality control for misfolded or incompletely synthesized proteins"/>
    <property type="evidence" value="ECO:0007669"/>
    <property type="project" value="UniProtKB-UniRule"/>
</dbReference>
<dbReference type="GO" id="GO:0072344">
    <property type="term" value="P:rescue of stalled ribosome"/>
    <property type="evidence" value="ECO:0007669"/>
    <property type="project" value="UniProtKB-UniRule"/>
</dbReference>
<dbReference type="CDD" id="cd00462">
    <property type="entry name" value="PTH"/>
    <property type="match status" value="1"/>
</dbReference>
<dbReference type="FunFam" id="3.40.50.1470:FF:000001">
    <property type="entry name" value="Peptidyl-tRNA hydrolase"/>
    <property type="match status" value="1"/>
</dbReference>
<dbReference type="Gene3D" id="3.40.50.1470">
    <property type="entry name" value="Peptidyl-tRNA hydrolase"/>
    <property type="match status" value="1"/>
</dbReference>
<dbReference type="HAMAP" id="MF_00083">
    <property type="entry name" value="Pept_tRNA_hydro_bact"/>
    <property type="match status" value="1"/>
</dbReference>
<dbReference type="InterPro" id="IPR001328">
    <property type="entry name" value="Pept_tRNA_hydro"/>
</dbReference>
<dbReference type="InterPro" id="IPR018171">
    <property type="entry name" value="Pept_tRNA_hydro_CS"/>
</dbReference>
<dbReference type="InterPro" id="IPR036416">
    <property type="entry name" value="Pept_tRNA_hydro_sf"/>
</dbReference>
<dbReference type="NCBIfam" id="TIGR00447">
    <property type="entry name" value="pth"/>
    <property type="match status" value="1"/>
</dbReference>
<dbReference type="PANTHER" id="PTHR17224">
    <property type="entry name" value="PEPTIDYL-TRNA HYDROLASE"/>
    <property type="match status" value="1"/>
</dbReference>
<dbReference type="PANTHER" id="PTHR17224:SF1">
    <property type="entry name" value="PEPTIDYL-TRNA HYDROLASE"/>
    <property type="match status" value="1"/>
</dbReference>
<dbReference type="Pfam" id="PF01195">
    <property type="entry name" value="Pept_tRNA_hydro"/>
    <property type="match status" value="1"/>
</dbReference>
<dbReference type="SUPFAM" id="SSF53178">
    <property type="entry name" value="Peptidyl-tRNA hydrolase-like"/>
    <property type="match status" value="1"/>
</dbReference>
<dbReference type="PROSITE" id="PS01195">
    <property type="entry name" value="PEPT_TRNA_HYDROL_1"/>
    <property type="match status" value="1"/>
</dbReference>
<dbReference type="PROSITE" id="PS01196">
    <property type="entry name" value="PEPT_TRNA_HYDROL_2"/>
    <property type="match status" value="1"/>
</dbReference>
<comment type="function">
    <text evidence="1">Hydrolyzes ribosome-free peptidyl-tRNAs (with 1 or more amino acids incorporated), which drop off the ribosome during protein synthesis, or as a result of ribosome stalling.</text>
</comment>
<comment type="function">
    <text evidence="1">Catalyzes the release of premature peptidyl moieties from peptidyl-tRNA molecules trapped in stalled 50S ribosomal subunits, and thus maintains levels of free tRNAs and 50S ribosomes.</text>
</comment>
<comment type="catalytic activity">
    <reaction evidence="1">
        <text>an N-acyl-L-alpha-aminoacyl-tRNA + H2O = an N-acyl-L-amino acid + a tRNA + H(+)</text>
        <dbReference type="Rhea" id="RHEA:54448"/>
        <dbReference type="Rhea" id="RHEA-COMP:10123"/>
        <dbReference type="Rhea" id="RHEA-COMP:13883"/>
        <dbReference type="ChEBI" id="CHEBI:15377"/>
        <dbReference type="ChEBI" id="CHEBI:15378"/>
        <dbReference type="ChEBI" id="CHEBI:59874"/>
        <dbReference type="ChEBI" id="CHEBI:78442"/>
        <dbReference type="ChEBI" id="CHEBI:138191"/>
        <dbReference type="EC" id="3.1.1.29"/>
    </reaction>
</comment>
<comment type="subunit">
    <text evidence="1">Monomer.</text>
</comment>
<comment type="subcellular location">
    <subcellularLocation>
        <location evidence="1">Cytoplasm</location>
    </subcellularLocation>
</comment>
<comment type="similarity">
    <text evidence="1">Belongs to the PTH family.</text>
</comment>
<evidence type="ECO:0000255" key="1">
    <source>
        <dbReference type="HAMAP-Rule" id="MF_00083"/>
    </source>
</evidence>
<sequence length="186" mass="21096">MKLIVGLGNPGREYELTRHNIGFMAIDELAKRWNISLNEQKFKGLFGAGFVNGEKVILLKPLTYMNLSGESIRPLMDYYKIDVEDFVVLYDDLDIPVGKLRLRMKGSAGGHNGVKSTISHLGTQEFQRIRMGIDRPKNGMKVVDYVLGRFTSEEIPDVNHSIEKAADACEEWLNKPFLQIMNTFNS</sequence>
<keyword id="KW-0963">Cytoplasm</keyword>
<keyword id="KW-0378">Hydrolase</keyword>
<keyword id="KW-1185">Reference proteome</keyword>
<keyword id="KW-0694">RNA-binding</keyword>
<keyword id="KW-0820">tRNA-binding</keyword>
<feature type="chain" id="PRO_0000187683" description="Peptidyl-tRNA hydrolase">
    <location>
        <begin position="1"/>
        <end position="186"/>
    </location>
</feature>
<feature type="active site" description="Proton acceptor" evidence="1">
    <location>
        <position position="19"/>
    </location>
</feature>
<feature type="binding site" evidence="1">
    <location>
        <position position="14"/>
    </location>
    <ligand>
        <name>tRNA</name>
        <dbReference type="ChEBI" id="CHEBI:17843"/>
    </ligand>
</feature>
<feature type="binding site" evidence="1">
    <location>
        <position position="64"/>
    </location>
    <ligand>
        <name>tRNA</name>
        <dbReference type="ChEBI" id="CHEBI:17843"/>
    </ligand>
</feature>
<feature type="binding site" evidence="1">
    <location>
        <position position="66"/>
    </location>
    <ligand>
        <name>tRNA</name>
        <dbReference type="ChEBI" id="CHEBI:17843"/>
    </ligand>
</feature>
<feature type="binding site" evidence="1">
    <location>
        <position position="112"/>
    </location>
    <ligand>
        <name>tRNA</name>
        <dbReference type="ChEBI" id="CHEBI:17843"/>
    </ligand>
</feature>
<feature type="site" description="Discriminates between blocked and unblocked aminoacyl-tRNA" evidence="1">
    <location>
        <position position="9"/>
    </location>
</feature>
<feature type="site" description="Stabilizes the basic form of H active site to accept a proton" evidence="1">
    <location>
        <position position="91"/>
    </location>
</feature>
<proteinExistence type="inferred from homology"/>
<reference key="1">
    <citation type="journal article" date="2003" name="Nature">
        <title>The genome sequence of Bacillus anthracis Ames and comparison to closely related bacteria.</title>
        <authorList>
            <person name="Read T.D."/>
            <person name="Peterson S.N."/>
            <person name="Tourasse N.J."/>
            <person name="Baillie L.W."/>
            <person name="Paulsen I.T."/>
            <person name="Nelson K.E."/>
            <person name="Tettelin H."/>
            <person name="Fouts D.E."/>
            <person name="Eisen J.A."/>
            <person name="Gill S.R."/>
            <person name="Holtzapple E.K."/>
            <person name="Okstad O.A."/>
            <person name="Helgason E."/>
            <person name="Rilstone J."/>
            <person name="Wu M."/>
            <person name="Kolonay J.F."/>
            <person name="Beanan M.J."/>
            <person name="Dodson R.J."/>
            <person name="Brinkac L.M."/>
            <person name="Gwinn M.L."/>
            <person name="DeBoy R.T."/>
            <person name="Madpu R."/>
            <person name="Daugherty S.C."/>
            <person name="Durkin A.S."/>
            <person name="Haft D.H."/>
            <person name="Nelson W.C."/>
            <person name="Peterson J.D."/>
            <person name="Pop M."/>
            <person name="Khouri H.M."/>
            <person name="Radune D."/>
            <person name="Benton J.L."/>
            <person name="Mahamoud Y."/>
            <person name="Jiang L."/>
            <person name="Hance I.R."/>
            <person name="Weidman J.F."/>
            <person name="Berry K.J."/>
            <person name="Plaut R.D."/>
            <person name="Wolf A.M."/>
            <person name="Watkins K.L."/>
            <person name="Nierman W.C."/>
            <person name="Hazen A."/>
            <person name="Cline R.T."/>
            <person name="Redmond C."/>
            <person name="Thwaite J.E."/>
            <person name="White O."/>
            <person name="Salzberg S.L."/>
            <person name="Thomason B."/>
            <person name="Friedlander A.M."/>
            <person name="Koehler T.M."/>
            <person name="Hanna P.C."/>
            <person name="Kolstoe A.-B."/>
            <person name="Fraser C.M."/>
        </authorList>
    </citation>
    <scope>NUCLEOTIDE SEQUENCE [LARGE SCALE GENOMIC DNA]</scope>
    <source>
        <strain>Ames / isolate Porton</strain>
    </source>
</reference>
<reference key="2">
    <citation type="journal article" date="2009" name="J. Bacteriol.">
        <title>The complete genome sequence of Bacillus anthracis Ames 'Ancestor'.</title>
        <authorList>
            <person name="Ravel J."/>
            <person name="Jiang L."/>
            <person name="Stanley S.T."/>
            <person name="Wilson M.R."/>
            <person name="Decker R.S."/>
            <person name="Read T.D."/>
            <person name="Worsham P."/>
            <person name="Keim P.S."/>
            <person name="Salzberg S.L."/>
            <person name="Fraser-Liggett C.M."/>
            <person name="Rasko D.A."/>
        </authorList>
    </citation>
    <scope>NUCLEOTIDE SEQUENCE [LARGE SCALE GENOMIC DNA]</scope>
    <source>
        <strain>Ames ancestor</strain>
    </source>
</reference>
<reference key="3">
    <citation type="submission" date="2004-01" db="EMBL/GenBank/DDBJ databases">
        <title>Complete genome sequence of Bacillus anthracis Sterne.</title>
        <authorList>
            <person name="Brettin T.S."/>
            <person name="Bruce D."/>
            <person name="Challacombe J.F."/>
            <person name="Gilna P."/>
            <person name="Han C."/>
            <person name="Hill K."/>
            <person name="Hitchcock P."/>
            <person name="Jackson P."/>
            <person name="Keim P."/>
            <person name="Longmire J."/>
            <person name="Lucas S."/>
            <person name="Okinaka R."/>
            <person name="Richardson P."/>
            <person name="Rubin E."/>
            <person name="Tice H."/>
        </authorList>
    </citation>
    <scope>NUCLEOTIDE SEQUENCE [LARGE SCALE GENOMIC DNA]</scope>
    <source>
        <strain>Sterne</strain>
    </source>
</reference>
<accession>Q81VY9</accession>
<accession>Q6I4Z3</accession>
<accession>Q6KYN7</accession>
<gene>
    <name evidence="1" type="primary">pth</name>
    <name type="synonym">spoVC</name>
    <name type="ordered locus">BA_0050</name>
    <name type="ordered locus">GBAA_0050</name>
    <name type="ordered locus">BAS0050</name>
</gene>
<name>PTH_BACAN</name>
<protein>
    <recommendedName>
        <fullName evidence="1">Peptidyl-tRNA hydrolase</fullName>
        <shortName evidence="1">Pth</shortName>
        <ecNumber evidence="1">3.1.1.29</ecNumber>
    </recommendedName>
</protein>
<organism>
    <name type="scientific">Bacillus anthracis</name>
    <dbReference type="NCBI Taxonomy" id="1392"/>
    <lineage>
        <taxon>Bacteria</taxon>
        <taxon>Bacillati</taxon>
        <taxon>Bacillota</taxon>
        <taxon>Bacilli</taxon>
        <taxon>Bacillales</taxon>
        <taxon>Bacillaceae</taxon>
        <taxon>Bacillus</taxon>
        <taxon>Bacillus cereus group</taxon>
    </lineage>
</organism>